<feature type="chain" id="PRO_1000201899" description="Phosphate acyltransferase">
    <location>
        <begin position="1"/>
        <end position="339"/>
    </location>
</feature>
<comment type="function">
    <text evidence="1">Catalyzes the reversible formation of acyl-phosphate (acyl-PO(4)) from acyl-[acyl-carrier-protein] (acyl-ACP). This enzyme utilizes acyl-ACP as fatty acyl donor, but not acyl-CoA.</text>
</comment>
<comment type="catalytic activity">
    <reaction evidence="1">
        <text>a fatty acyl-[ACP] + phosphate = an acyl phosphate + holo-[ACP]</text>
        <dbReference type="Rhea" id="RHEA:42292"/>
        <dbReference type="Rhea" id="RHEA-COMP:9685"/>
        <dbReference type="Rhea" id="RHEA-COMP:14125"/>
        <dbReference type="ChEBI" id="CHEBI:43474"/>
        <dbReference type="ChEBI" id="CHEBI:59918"/>
        <dbReference type="ChEBI" id="CHEBI:64479"/>
        <dbReference type="ChEBI" id="CHEBI:138651"/>
        <dbReference type="EC" id="2.3.1.274"/>
    </reaction>
</comment>
<comment type="pathway">
    <text evidence="1">Lipid metabolism; phospholipid metabolism.</text>
</comment>
<comment type="subunit">
    <text evidence="1">Homodimer. Probably interacts with PlsY.</text>
</comment>
<comment type="subcellular location">
    <subcellularLocation>
        <location evidence="1">Cytoplasm</location>
    </subcellularLocation>
    <text evidence="1">Associated with the membrane possibly through PlsY.</text>
</comment>
<comment type="similarity">
    <text evidence="1">Belongs to the PlsX family.</text>
</comment>
<evidence type="ECO:0000255" key="1">
    <source>
        <dbReference type="HAMAP-Rule" id="MF_00019"/>
    </source>
</evidence>
<sequence>MSVLTVALDAMGGDFGPSETVPAAAQALSLLPKLNILLVGDQNQLVPLLQQHALSSHPRLHLVHASQSVSMAERPVIALRNKTDSSMRVMLELVSSGRAQACVSGGNTGALMVMAMRVLTMLPHLKRPALCSSLPNLHGRHTVMLDLGCNVNCTPEMLWQFACLGDLFAKHVHAVSSPKIALLNVGEEVIKGSKLVQETAKLLASDKQFNYIGFLEGDQLISGQADVIVCDGFTGNIALKTAEGIARFFYSQIKASNEADKVKNKSNTAAEIQTSLSVMHPDHYNGASLLGLNGIVIKSHGRADRRALSNAILHAVAEIEQQLPRRISERFIAEHTYER</sequence>
<gene>
    <name evidence="1" type="primary">plsX</name>
    <name type="ordered locus">Tola_2195</name>
</gene>
<dbReference type="EC" id="2.3.1.274" evidence="1"/>
<dbReference type="EMBL" id="CP001616">
    <property type="protein sequence ID" value="ACQ93794.1"/>
    <property type="molecule type" value="Genomic_DNA"/>
</dbReference>
<dbReference type="RefSeq" id="WP_015879262.1">
    <property type="nucleotide sequence ID" value="NC_012691.1"/>
</dbReference>
<dbReference type="SMR" id="C4L8E8"/>
<dbReference type="STRING" id="595494.Tola_2195"/>
<dbReference type="KEGG" id="tau:Tola_2195"/>
<dbReference type="eggNOG" id="COG0416">
    <property type="taxonomic scope" value="Bacteria"/>
</dbReference>
<dbReference type="HOGENOM" id="CLU_039379_1_0_6"/>
<dbReference type="OrthoDB" id="9806408at2"/>
<dbReference type="UniPathway" id="UPA00085"/>
<dbReference type="Proteomes" id="UP000009073">
    <property type="component" value="Chromosome"/>
</dbReference>
<dbReference type="GO" id="GO:0005737">
    <property type="term" value="C:cytoplasm"/>
    <property type="evidence" value="ECO:0007669"/>
    <property type="project" value="UniProtKB-SubCell"/>
</dbReference>
<dbReference type="GO" id="GO:0043811">
    <property type="term" value="F:phosphate:acyl-[acyl carrier protein] acyltransferase activity"/>
    <property type="evidence" value="ECO:0007669"/>
    <property type="project" value="UniProtKB-UniRule"/>
</dbReference>
<dbReference type="GO" id="GO:0006633">
    <property type="term" value="P:fatty acid biosynthetic process"/>
    <property type="evidence" value="ECO:0007669"/>
    <property type="project" value="UniProtKB-UniRule"/>
</dbReference>
<dbReference type="GO" id="GO:0008654">
    <property type="term" value="P:phospholipid biosynthetic process"/>
    <property type="evidence" value="ECO:0007669"/>
    <property type="project" value="UniProtKB-KW"/>
</dbReference>
<dbReference type="Gene3D" id="3.40.718.10">
    <property type="entry name" value="Isopropylmalate Dehydrogenase"/>
    <property type="match status" value="1"/>
</dbReference>
<dbReference type="HAMAP" id="MF_00019">
    <property type="entry name" value="PlsX"/>
    <property type="match status" value="1"/>
</dbReference>
<dbReference type="InterPro" id="IPR003664">
    <property type="entry name" value="FA_synthesis"/>
</dbReference>
<dbReference type="InterPro" id="IPR012281">
    <property type="entry name" value="Phospholipid_synth_PlsX-like"/>
</dbReference>
<dbReference type="NCBIfam" id="TIGR00182">
    <property type="entry name" value="plsX"/>
    <property type="match status" value="1"/>
</dbReference>
<dbReference type="PANTHER" id="PTHR30100">
    <property type="entry name" value="FATTY ACID/PHOSPHOLIPID SYNTHESIS PROTEIN PLSX"/>
    <property type="match status" value="1"/>
</dbReference>
<dbReference type="PANTHER" id="PTHR30100:SF1">
    <property type="entry name" value="PHOSPHATE ACYLTRANSFERASE"/>
    <property type="match status" value="1"/>
</dbReference>
<dbReference type="Pfam" id="PF02504">
    <property type="entry name" value="FA_synthesis"/>
    <property type="match status" value="1"/>
</dbReference>
<dbReference type="PIRSF" id="PIRSF002465">
    <property type="entry name" value="Phsphlp_syn_PlsX"/>
    <property type="match status" value="1"/>
</dbReference>
<dbReference type="SUPFAM" id="SSF53659">
    <property type="entry name" value="Isocitrate/Isopropylmalate dehydrogenase-like"/>
    <property type="match status" value="1"/>
</dbReference>
<protein>
    <recommendedName>
        <fullName evidence="1">Phosphate acyltransferase</fullName>
        <ecNumber evidence="1">2.3.1.274</ecNumber>
    </recommendedName>
    <alternativeName>
        <fullName evidence="1">Acyl-ACP phosphotransacylase</fullName>
    </alternativeName>
    <alternativeName>
        <fullName evidence="1">Acyl-[acyl-carrier-protein]--phosphate acyltransferase</fullName>
    </alternativeName>
    <alternativeName>
        <fullName evidence="1">Phosphate-acyl-ACP acyltransferase</fullName>
    </alternativeName>
</protein>
<organism>
    <name type="scientific">Tolumonas auensis (strain DSM 9187 / NBRC 110442 / TA 4)</name>
    <dbReference type="NCBI Taxonomy" id="595494"/>
    <lineage>
        <taxon>Bacteria</taxon>
        <taxon>Pseudomonadati</taxon>
        <taxon>Pseudomonadota</taxon>
        <taxon>Gammaproteobacteria</taxon>
        <taxon>Aeromonadales</taxon>
        <taxon>Aeromonadaceae</taxon>
        <taxon>Tolumonas</taxon>
    </lineage>
</organism>
<name>PLSX_TOLAT</name>
<accession>C4L8E8</accession>
<proteinExistence type="inferred from homology"/>
<reference key="1">
    <citation type="submission" date="2009-05" db="EMBL/GenBank/DDBJ databases">
        <title>Complete sequence of Tolumonas auensis DSM 9187.</title>
        <authorList>
            <consortium name="US DOE Joint Genome Institute"/>
            <person name="Lucas S."/>
            <person name="Copeland A."/>
            <person name="Lapidus A."/>
            <person name="Glavina del Rio T."/>
            <person name="Tice H."/>
            <person name="Bruce D."/>
            <person name="Goodwin L."/>
            <person name="Pitluck S."/>
            <person name="Chertkov O."/>
            <person name="Brettin T."/>
            <person name="Detter J.C."/>
            <person name="Han C."/>
            <person name="Larimer F."/>
            <person name="Land M."/>
            <person name="Hauser L."/>
            <person name="Kyrpides N."/>
            <person name="Mikhailova N."/>
            <person name="Spring S."/>
            <person name="Beller H."/>
        </authorList>
    </citation>
    <scope>NUCLEOTIDE SEQUENCE [LARGE SCALE GENOMIC DNA]</scope>
    <source>
        <strain>DSM 9187 / NBRC 110442 / TA 4</strain>
    </source>
</reference>
<keyword id="KW-0963">Cytoplasm</keyword>
<keyword id="KW-0444">Lipid biosynthesis</keyword>
<keyword id="KW-0443">Lipid metabolism</keyword>
<keyword id="KW-0594">Phospholipid biosynthesis</keyword>
<keyword id="KW-1208">Phospholipid metabolism</keyword>
<keyword id="KW-1185">Reference proteome</keyword>
<keyword id="KW-0808">Transferase</keyword>